<dbReference type="EMBL" id="AAEY01000010">
    <property type="protein sequence ID" value="EAL22552.1"/>
    <property type="molecule type" value="Genomic_DNA"/>
</dbReference>
<dbReference type="RefSeq" id="XP_777199.1">
    <property type="nucleotide sequence ID" value="XM_772106.1"/>
</dbReference>
<dbReference type="SMR" id="P0CN49"/>
<dbReference type="EnsemblFungi" id="AAW41507">
    <property type="protein sequence ID" value="AAW41507"/>
    <property type="gene ID" value="CNB01420"/>
</dbReference>
<dbReference type="GeneID" id="4934523"/>
<dbReference type="KEGG" id="cnb:CNBB4290"/>
<dbReference type="VEuPathDB" id="FungiDB:CNBB4290"/>
<dbReference type="HOGENOM" id="CLU_024521_2_0_1"/>
<dbReference type="OrthoDB" id="7267at5206"/>
<dbReference type="GO" id="GO:0005829">
    <property type="term" value="C:cytosol"/>
    <property type="evidence" value="ECO:0007669"/>
    <property type="project" value="EnsemblFungi"/>
</dbReference>
<dbReference type="GO" id="GO:0016282">
    <property type="term" value="C:eukaryotic 43S preinitiation complex"/>
    <property type="evidence" value="ECO:0007669"/>
    <property type="project" value="UniProtKB-UniRule"/>
</dbReference>
<dbReference type="GO" id="GO:0033290">
    <property type="term" value="C:eukaryotic 48S preinitiation complex"/>
    <property type="evidence" value="ECO:0007669"/>
    <property type="project" value="UniProtKB-UniRule"/>
</dbReference>
<dbReference type="GO" id="GO:0071540">
    <property type="term" value="C:eukaryotic translation initiation factor 3 complex, eIF3e"/>
    <property type="evidence" value="ECO:0007669"/>
    <property type="project" value="EnsemblFungi"/>
</dbReference>
<dbReference type="GO" id="GO:0071541">
    <property type="term" value="C:eukaryotic translation initiation factor 3 complex, eIF3m"/>
    <property type="evidence" value="ECO:0007669"/>
    <property type="project" value="EnsemblFungi"/>
</dbReference>
<dbReference type="GO" id="GO:0098808">
    <property type="term" value="F:mRNA cap binding"/>
    <property type="evidence" value="ECO:0007669"/>
    <property type="project" value="UniProtKB-UniRule"/>
</dbReference>
<dbReference type="GO" id="GO:0003743">
    <property type="term" value="F:translation initiation factor activity"/>
    <property type="evidence" value="ECO:0007669"/>
    <property type="project" value="UniProtKB-UniRule"/>
</dbReference>
<dbReference type="GO" id="GO:0002191">
    <property type="term" value="P:cap-dependent translational initiation"/>
    <property type="evidence" value="ECO:0007669"/>
    <property type="project" value="UniProtKB-UniRule"/>
</dbReference>
<dbReference type="GO" id="GO:0001732">
    <property type="term" value="P:formation of cytoplasmic translation initiation complex"/>
    <property type="evidence" value="ECO:0007669"/>
    <property type="project" value="UniProtKB-UniRule"/>
</dbReference>
<dbReference type="HAMAP" id="MF_03003">
    <property type="entry name" value="eIF3d"/>
    <property type="match status" value="1"/>
</dbReference>
<dbReference type="InterPro" id="IPR007783">
    <property type="entry name" value="eIF3d"/>
</dbReference>
<dbReference type="PANTHER" id="PTHR12399">
    <property type="entry name" value="EUKARYOTIC TRANSLATION INITIATION FACTOR 3 SUBUNIT 7"/>
    <property type="match status" value="1"/>
</dbReference>
<dbReference type="PANTHER" id="PTHR12399:SF0">
    <property type="entry name" value="EUKARYOTIC TRANSLATION INITIATION FACTOR 3 SUBUNIT D"/>
    <property type="match status" value="1"/>
</dbReference>
<dbReference type="Pfam" id="PF05091">
    <property type="entry name" value="eIF-3_zeta"/>
    <property type="match status" value="1"/>
</dbReference>
<dbReference type="PIRSF" id="PIRSF016281">
    <property type="entry name" value="EIF-3_zeta"/>
    <property type="match status" value="1"/>
</dbReference>
<sequence>MANFVLPPIHDNSDGSWGPSTSTLPAQFKDIPYAPFSKSDKITRIADWHDPQAEAAAGTRTARTVQSGGRRTAYGAAEGTVFGFVHDEDEKSFSLVDSGVRVGARGKAPIRGRSVRGVASARGARGRGGQRGGFSTRGGRGGARGGYGDWNKPQRTRDSSVTIGPEWEVLEEIDFNRLSKLSLSVEDPEDLASYGTVQAYDKTFDRINTRNEKPLEIVNRVRYNPSTSDDPIISQYAEKKEAQIFATDSILAVLMCAGRSVNSWDIIIEHRNGQVFFDKRESGPLDYITVNENAADPPVDSDDVSNINSAGSLSLEATYISHNFSSQVSANSKSKAYTPNPNPFYSPEVESEPPASTLYKYRKFDLSIDEEEQFSVILRTEADAYLGKKEVLVTVKALNEYDPRVQGGSGKPLDWRKNLDTQKGAILASEMKNNSAKFARWAIQSILAGVEQMKMGYISRANPRDAQRHTIVGVQSFKPLDFARQMNVSLANGWGIVRTIADLVLKQPEGKFVLVKDPNNPLVRLYKVPDDTFEAGAEEEEEEQDEE</sequence>
<feature type="chain" id="PRO_0000410078" description="Eukaryotic translation initiation factor 3 subunit D">
    <location>
        <begin position="1"/>
        <end position="547"/>
    </location>
</feature>
<feature type="region of interest" description="Disordered" evidence="3">
    <location>
        <begin position="1"/>
        <end position="22"/>
    </location>
</feature>
<feature type="region of interest" description="Disordered" evidence="3">
    <location>
        <begin position="114"/>
        <end position="159"/>
    </location>
</feature>
<feature type="region of interest" description="RNA gate" evidence="1">
    <location>
        <begin position="284"/>
        <end position="298"/>
    </location>
</feature>
<feature type="compositionally biased region" description="Gly residues" evidence="3">
    <location>
        <begin position="126"/>
        <end position="148"/>
    </location>
</feature>
<keyword id="KW-0963">Cytoplasm</keyword>
<keyword id="KW-0396">Initiation factor</keyword>
<keyword id="KW-0648">Protein biosynthesis</keyword>
<keyword id="KW-0694">RNA-binding</keyword>
<accession>P0CN49</accession>
<accession>Q55XD3</accession>
<accession>Q5KMK1</accession>
<evidence type="ECO:0000250" key="1">
    <source>
        <dbReference type="UniProtKB" id="K7IM66"/>
    </source>
</evidence>
<evidence type="ECO:0000255" key="2">
    <source>
        <dbReference type="HAMAP-Rule" id="MF_03003"/>
    </source>
</evidence>
<evidence type="ECO:0000256" key="3">
    <source>
        <dbReference type="SAM" id="MobiDB-lite"/>
    </source>
</evidence>
<organism>
    <name type="scientific">Cryptococcus neoformans var. neoformans serotype D (strain B-3501A)</name>
    <name type="common">Filobasidiella neoformans</name>
    <dbReference type="NCBI Taxonomy" id="283643"/>
    <lineage>
        <taxon>Eukaryota</taxon>
        <taxon>Fungi</taxon>
        <taxon>Dikarya</taxon>
        <taxon>Basidiomycota</taxon>
        <taxon>Agaricomycotina</taxon>
        <taxon>Tremellomycetes</taxon>
        <taxon>Tremellales</taxon>
        <taxon>Cryptococcaceae</taxon>
        <taxon>Cryptococcus</taxon>
        <taxon>Cryptococcus neoformans species complex</taxon>
    </lineage>
</organism>
<protein>
    <recommendedName>
        <fullName evidence="2">Eukaryotic translation initiation factor 3 subunit D</fullName>
        <shortName evidence="2">eIF3d</shortName>
    </recommendedName>
</protein>
<name>EIF3D_CRYNB</name>
<gene>
    <name type="ordered locus">CNBB4290</name>
</gene>
<reference key="1">
    <citation type="journal article" date="2005" name="Science">
        <title>The genome of the basidiomycetous yeast and human pathogen Cryptococcus neoformans.</title>
        <authorList>
            <person name="Loftus B.J."/>
            <person name="Fung E."/>
            <person name="Roncaglia P."/>
            <person name="Rowley D."/>
            <person name="Amedeo P."/>
            <person name="Bruno D."/>
            <person name="Vamathevan J."/>
            <person name="Miranda M."/>
            <person name="Anderson I.J."/>
            <person name="Fraser J.A."/>
            <person name="Allen J.E."/>
            <person name="Bosdet I.E."/>
            <person name="Brent M.R."/>
            <person name="Chiu R."/>
            <person name="Doering T.L."/>
            <person name="Donlin M.J."/>
            <person name="D'Souza C.A."/>
            <person name="Fox D.S."/>
            <person name="Grinberg V."/>
            <person name="Fu J."/>
            <person name="Fukushima M."/>
            <person name="Haas B.J."/>
            <person name="Huang J.C."/>
            <person name="Janbon G."/>
            <person name="Jones S.J.M."/>
            <person name="Koo H.L."/>
            <person name="Krzywinski M.I."/>
            <person name="Kwon-Chung K.J."/>
            <person name="Lengeler K.B."/>
            <person name="Maiti R."/>
            <person name="Marra M.A."/>
            <person name="Marra R.E."/>
            <person name="Mathewson C.A."/>
            <person name="Mitchell T.G."/>
            <person name="Pertea M."/>
            <person name="Riggs F.R."/>
            <person name="Salzberg S.L."/>
            <person name="Schein J.E."/>
            <person name="Shvartsbeyn A."/>
            <person name="Shin H."/>
            <person name="Shumway M."/>
            <person name="Specht C.A."/>
            <person name="Suh B.B."/>
            <person name="Tenney A."/>
            <person name="Utterback T.R."/>
            <person name="Wickes B.L."/>
            <person name="Wortman J.R."/>
            <person name="Wye N.H."/>
            <person name="Kronstad J.W."/>
            <person name="Lodge J.K."/>
            <person name="Heitman J."/>
            <person name="Davis R.W."/>
            <person name="Fraser C.M."/>
            <person name="Hyman R.W."/>
        </authorList>
    </citation>
    <scope>NUCLEOTIDE SEQUENCE [LARGE SCALE GENOMIC DNA]</scope>
    <source>
        <strain>B-3501A</strain>
    </source>
</reference>
<comment type="function">
    <text evidence="2">mRNA cap-binding component of the eukaryotic translation initiation factor 3 (eIF-3) complex, which is involved in protein synthesis of a specialized repertoire of mRNAs and, together with other initiation factors, stimulates binding of mRNA and methionyl-tRNAi to the 40S ribosome. The eIF-3 complex specifically targets and initiates translation of a subset of mRNAs involved in cell proliferation. In the eIF-3 complex, eif3d specifically recognizes and binds the 7-methylguanosine cap of a subset of mRNAs.</text>
</comment>
<comment type="subunit">
    <text evidence="2">Component of the eukaryotic translation initiation factor 3 (eIF-3) complex.</text>
</comment>
<comment type="subcellular location">
    <subcellularLocation>
        <location evidence="2">Cytoplasm</location>
    </subcellularLocation>
</comment>
<comment type="domain">
    <text evidence="2">The RNA gate region regulates mRNA cap recognition to prevent promiscuous mRNA-binding before assembly of eif3d into the full eukaryotic translation initiation factor 3 (eIF-3) complex.</text>
</comment>
<comment type="similarity">
    <text evidence="2">Belongs to the eIF-3 subunit D family.</text>
</comment>
<proteinExistence type="inferred from homology"/>